<keyword id="KW-0227">DNA damage</keyword>
<keyword id="KW-0234">DNA repair</keyword>
<keyword id="KW-0378">Hydrolase</keyword>
<accession>B7HXM9</accession>
<evidence type="ECO:0000255" key="1">
    <source>
        <dbReference type="HAMAP-Rule" id="MF_00527"/>
    </source>
</evidence>
<proteinExistence type="inferred from homology"/>
<sequence>MQAPPSFYEGDTLEVAKKLLGQKLVHIVNGIKRSGIIVEVEAYKGPDDKAAHSYGGRRTDRTEVMFGAPGHAYVYLIYGMYHCFNVITAPVGTPQGVLIRALEPVDGIEEIKLARYNKTDITKAQYKNLTNGPGKLCRALGITLEERGVSLQSDTLHIELVREEEHISSQYKITAGPRINIDYAEEAIHYPWRFYYEGHPFVSKK</sequence>
<organism>
    <name type="scientific">Bacillus cereus (strain AH187)</name>
    <dbReference type="NCBI Taxonomy" id="405534"/>
    <lineage>
        <taxon>Bacteria</taxon>
        <taxon>Bacillati</taxon>
        <taxon>Bacillota</taxon>
        <taxon>Bacilli</taxon>
        <taxon>Bacillales</taxon>
        <taxon>Bacillaceae</taxon>
        <taxon>Bacillus</taxon>
        <taxon>Bacillus cereus group</taxon>
    </lineage>
</organism>
<reference key="1">
    <citation type="submission" date="2008-10" db="EMBL/GenBank/DDBJ databases">
        <title>Genome sequence of Bacillus cereus AH187.</title>
        <authorList>
            <person name="Dodson R.J."/>
            <person name="Durkin A.S."/>
            <person name="Rosovitz M.J."/>
            <person name="Rasko D.A."/>
            <person name="Kolsto A.B."/>
            <person name="Okstad O.A."/>
            <person name="Ravel J."/>
            <person name="Sutton G."/>
        </authorList>
    </citation>
    <scope>NUCLEOTIDE SEQUENCE [LARGE SCALE GENOMIC DNA]</scope>
    <source>
        <strain>AH187</strain>
    </source>
</reference>
<dbReference type="EC" id="3.2.2.-" evidence="1"/>
<dbReference type="EMBL" id="CP001177">
    <property type="protein sequence ID" value="ACJ80578.1"/>
    <property type="molecule type" value="Genomic_DNA"/>
</dbReference>
<dbReference type="SMR" id="B7HXM9"/>
<dbReference type="KEGG" id="bcr:BCAH187_A1048"/>
<dbReference type="HOGENOM" id="CLU_060471_0_2_9"/>
<dbReference type="Proteomes" id="UP000002214">
    <property type="component" value="Chromosome"/>
</dbReference>
<dbReference type="GO" id="GO:0003905">
    <property type="term" value="F:alkylbase DNA N-glycosylase activity"/>
    <property type="evidence" value="ECO:0007669"/>
    <property type="project" value="InterPro"/>
</dbReference>
<dbReference type="GO" id="GO:0003677">
    <property type="term" value="F:DNA binding"/>
    <property type="evidence" value="ECO:0007669"/>
    <property type="project" value="InterPro"/>
</dbReference>
<dbReference type="GO" id="GO:0006284">
    <property type="term" value="P:base-excision repair"/>
    <property type="evidence" value="ECO:0007669"/>
    <property type="project" value="InterPro"/>
</dbReference>
<dbReference type="CDD" id="cd00540">
    <property type="entry name" value="AAG"/>
    <property type="match status" value="1"/>
</dbReference>
<dbReference type="FunFam" id="3.10.300.10:FF:000001">
    <property type="entry name" value="Putative 3-methyladenine DNA glycosylase"/>
    <property type="match status" value="1"/>
</dbReference>
<dbReference type="Gene3D" id="3.10.300.10">
    <property type="entry name" value="Methylpurine-DNA glycosylase (MPG)"/>
    <property type="match status" value="1"/>
</dbReference>
<dbReference type="HAMAP" id="MF_00527">
    <property type="entry name" value="3MGH"/>
    <property type="match status" value="1"/>
</dbReference>
<dbReference type="InterPro" id="IPR011034">
    <property type="entry name" value="Formyl_transferase-like_C_sf"/>
</dbReference>
<dbReference type="InterPro" id="IPR003180">
    <property type="entry name" value="MPG"/>
</dbReference>
<dbReference type="InterPro" id="IPR036995">
    <property type="entry name" value="MPG_sf"/>
</dbReference>
<dbReference type="NCBIfam" id="TIGR00567">
    <property type="entry name" value="3mg"/>
    <property type="match status" value="1"/>
</dbReference>
<dbReference type="NCBIfam" id="NF002001">
    <property type="entry name" value="PRK00802.1-1"/>
    <property type="match status" value="1"/>
</dbReference>
<dbReference type="NCBIfam" id="NF002003">
    <property type="entry name" value="PRK00802.1-3"/>
    <property type="match status" value="1"/>
</dbReference>
<dbReference type="PANTHER" id="PTHR10429">
    <property type="entry name" value="DNA-3-METHYLADENINE GLYCOSYLASE"/>
    <property type="match status" value="1"/>
</dbReference>
<dbReference type="PANTHER" id="PTHR10429:SF0">
    <property type="entry name" value="DNA-3-METHYLADENINE GLYCOSYLASE"/>
    <property type="match status" value="1"/>
</dbReference>
<dbReference type="Pfam" id="PF02245">
    <property type="entry name" value="Pur_DNA_glyco"/>
    <property type="match status" value="1"/>
</dbReference>
<dbReference type="SUPFAM" id="SSF50486">
    <property type="entry name" value="FMT C-terminal domain-like"/>
    <property type="match status" value="1"/>
</dbReference>
<name>3MGH_BACC7</name>
<comment type="similarity">
    <text evidence="1">Belongs to the DNA glycosylase MPG family.</text>
</comment>
<feature type="chain" id="PRO_1000127748" description="Putative 3-methyladenine DNA glycosylase">
    <location>
        <begin position="1"/>
        <end position="205"/>
    </location>
</feature>
<gene>
    <name type="ordered locus">BCAH187_A1048</name>
</gene>
<protein>
    <recommendedName>
        <fullName evidence="1">Putative 3-methyladenine DNA glycosylase</fullName>
        <ecNumber evidence="1">3.2.2.-</ecNumber>
    </recommendedName>
</protein>